<feature type="signal peptide" evidence="5">
    <location>
        <begin position="1" status="less than"/>
        <end position="1"/>
    </location>
</feature>
<feature type="chain" id="PRO_0000448287" description="Snake venom 5'-nucleotidase" evidence="1">
    <location>
        <begin position="2"/>
        <end position="529" status="greater than"/>
    </location>
</feature>
<feature type="propeptide" id="PRO_0000448288" description="Removed in mature form" evidence="2">
    <location>
        <begin position="526"/>
        <end position="529"/>
    </location>
</feature>
<feature type="binding site" evidence="9 10">
    <location>
        <position position="12"/>
    </location>
    <ligand>
        <name>Zn(2+)</name>
        <dbReference type="ChEBI" id="CHEBI:29105"/>
        <label>1</label>
    </ligand>
</feature>
<feature type="binding site" evidence="9 10">
    <location>
        <position position="12"/>
    </location>
    <ligand>
        <name>Zn(2+)</name>
        <dbReference type="ChEBI" id="CHEBI:29105"/>
        <label>2</label>
    </ligand>
</feature>
<feature type="binding site" evidence="9 10">
    <location>
        <position position="14"/>
    </location>
    <ligand>
        <name>Zn(2+)</name>
        <dbReference type="ChEBI" id="CHEBI:29105"/>
        <label>1</label>
    </ligand>
</feature>
<feature type="binding site" evidence="9 10">
    <location>
        <position position="60"/>
    </location>
    <ligand>
        <name>Zn(2+)</name>
        <dbReference type="ChEBI" id="CHEBI:29105"/>
        <label>1</label>
    </ligand>
</feature>
<feature type="binding site" evidence="9 10">
    <location>
        <position position="60"/>
    </location>
    <ligand>
        <name>Zn(2+)</name>
        <dbReference type="ChEBI" id="CHEBI:29105"/>
        <label>2</label>
    </ligand>
</feature>
<feature type="binding site" evidence="9 10">
    <location>
        <position position="92"/>
    </location>
    <ligand>
        <name>Zn(2+)</name>
        <dbReference type="ChEBI" id="CHEBI:29105"/>
        <label>2</label>
    </ligand>
</feature>
<feature type="binding site" evidence="9 10">
    <location>
        <position position="195"/>
    </location>
    <ligand>
        <name>Zn(2+)</name>
        <dbReference type="ChEBI" id="CHEBI:29105"/>
        <label>2</label>
    </ligand>
</feature>
<feature type="binding site" evidence="9 10">
    <location>
        <position position="218"/>
    </location>
    <ligand>
        <name>Zn(2+)</name>
        <dbReference type="ChEBI" id="CHEBI:29105"/>
        <label>2</label>
    </ligand>
</feature>
<feature type="binding site" evidence="2">
    <location>
        <position position="329"/>
    </location>
    <ligand>
        <name>AMP</name>
        <dbReference type="ChEBI" id="CHEBI:456215"/>
    </ligand>
</feature>
<feature type="binding site" evidence="2">
    <location>
        <position position="365"/>
    </location>
    <ligand>
        <name>AMP</name>
        <dbReference type="ChEBI" id="CHEBI:456215"/>
    </ligand>
</feature>
<feature type="binding site" evidence="2">
    <location>
        <position position="370"/>
    </location>
    <ligand>
        <name>AMP</name>
        <dbReference type="ChEBI" id="CHEBI:456215"/>
    </ligand>
</feature>
<feature type="binding site" evidence="2">
    <location>
        <position position="393"/>
    </location>
    <ligand>
        <name>AMP</name>
        <dbReference type="ChEBI" id="CHEBI:456215"/>
    </ligand>
</feature>
<feature type="binding site" evidence="2">
    <location>
        <position position="476"/>
    </location>
    <ligand>
        <name>AMP</name>
        <dbReference type="ChEBI" id="CHEBI:456215"/>
    </ligand>
</feature>
<feature type="binding site" evidence="2">
    <location>
        <position position="482"/>
    </location>
    <ligand>
        <name>AMP</name>
        <dbReference type="ChEBI" id="CHEBI:456215"/>
    </ligand>
</feature>
<feature type="site" description="Transition state stabilizer" evidence="2">
    <location>
        <position position="93"/>
    </location>
</feature>
<feature type="site" description="Transition state stabilizer" evidence="2">
    <location>
        <position position="96"/>
    </location>
</feature>
<feature type="lipid moiety-binding region" description="GPI-anchor amidated serine" evidence="2">
    <location>
        <position position="525"/>
    </location>
</feature>
<feature type="glycosylation site" description="N-linked (GlcNAc...) asparagine" evidence="9">
    <location>
        <position position="308"/>
    </location>
</feature>
<feature type="glycosylation site" description="N-linked (GlcNAc...) asparagine" evidence="9">
    <location>
        <position position="322"/>
    </location>
</feature>
<feature type="disulfide bond" evidence="9">
    <location>
        <begin position="27"/>
        <end position="32"/>
    </location>
</feature>
<feature type="disulfide bond" evidence="9">
    <location>
        <begin position="328"/>
        <end position="333"/>
    </location>
</feature>
<feature type="disulfide bond" evidence="9">
    <location>
        <begin position="340"/>
        <end position="362"/>
    </location>
</feature>
<feature type="disulfide bond" evidence="9">
    <location>
        <begin position="452"/>
        <end position="455"/>
    </location>
</feature>
<feature type="non-terminal residue" evidence="5">
    <location>
        <position position="1"/>
    </location>
</feature>
<feature type="non-terminal residue" evidence="5">
    <location>
        <position position="529"/>
    </location>
</feature>
<feature type="strand" evidence="11">
    <location>
        <begin position="2"/>
        <end position="10"/>
    </location>
</feature>
<feature type="strand" evidence="11">
    <location>
        <begin position="24"/>
        <end position="26"/>
    </location>
</feature>
<feature type="strand" evidence="11">
    <location>
        <begin position="29"/>
        <end position="31"/>
    </location>
</feature>
<feature type="helix" evidence="11">
    <location>
        <begin position="36"/>
        <end position="49"/>
    </location>
</feature>
<feature type="strand" evidence="11">
    <location>
        <begin position="51"/>
        <end position="57"/>
    </location>
</feature>
<feature type="strand" evidence="11">
    <location>
        <begin position="62"/>
        <end position="65"/>
    </location>
</feature>
<feature type="helix" evidence="11">
    <location>
        <begin position="66"/>
        <end position="71"/>
    </location>
</feature>
<feature type="helix" evidence="11">
    <location>
        <begin position="74"/>
        <end position="82"/>
    </location>
</feature>
<feature type="strand" evidence="11">
    <location>
        <begin position="86"/>
        <end position="89"/>
    </location>
</feature>
<feature type="helix" evidence="11">
    <location>
        <begin position="92"/>
        <end position="95"/>
    </location>
</feature>
<feature type="helix" evidence="11">
    <location>
        <begin position="98"/>
        <end position="103"/>
    </location>
</feature>
<feature type="helix" evidence="11">
    <location>
        <begin position="106"/>
        <end position="109"/>
    </location>
</feature>
<feature type="strand" evidence="11">
    <location>
        <begin position="119"/>
        <end position="121"/>
    </location>
</feature>
<feature type="helix" evidence="11">
    <location>
        <begin position="123"/>
        <end position="125"/>
    </location>
</feature>
<feature type="helix" evidence="11">
    <location>
        <begin position="126"/>
        <end position="132"/>
    </location>
</feature>
<feature type="strand" evidence="11">
    <location>
        <begin position="133"/>
        <end position="141"/>
    </location>
</feature>
<feature type="strand" evidence="11">
    <location>
        <begin position="144"/>
        <end position="152"/>
    </location>
</feature>
<feature type="helix" evidence="11">
    <location>
        <begin position="156"/>
        <end position="159"/>
    </location>
</feature>
<feature type="strand" evidence="11">
    <location>
        <begin position="166"/>
        <end position="168"/>
    </location>
</feature>
<feature type="helix" evidence="11">
    <location>
        <begin position="171"/>
        <end position="184"/>
    </location>
</feature>
<feature type="strand" evidence="11">
    <location>
        <begin position="190"/>
        <end position="196"/>
    </location>
</feature>
<feature type="helix" evidence="11">
    <location>
        <begin position="198"/>
        <end position="207"/>
    </location>
</feature>
<feature type="strand" evidence="11">
    <location>
        <begin position="213"/>
        <end position="215"/>
    </location>
</feature>
<feature type="strand" evidence="11">
    <location>
        <begin position="225"/>
        <end position="227"/>
    </location>
</feature>
<feature type="strand" evidence="11">
    <location>
        <begin position="229"/>
        <end position="231"/>
    </location>
</feature>
<feature type="strand" evidence="11">
    <location>
        <begin position="238"/>
        <end position="243"/>
    </location>
</feature>
<feature type="strand" evidence="11">
    <location>
        <begin position="249"/>
        <end position="253"/>
    </location>
</feature>
<feature type="strand" evidence="11">
    <location>
        <begin position="260"/>
        <end position="270"/>
    </location>
</feature>
<feature type="strand" evidence="11">
    <location>
        <begin position="275"/>
        <end position="280"/>
    </location>
</feature>
<feature type="helix" evidence="11">
    <location>
        <begin position="293"/>
        <end position="310"/>
    </location>
</feature>
<feature type="strand" evidence="11">
    <location>
        <begin position="315"/>
        <end position="319"/>
    </location>
</feature>
<feature type="helix" evidence="11">
    <location>
        <begin position="325"/>
        <end position="328"/>
    </location>
</feature>
<feature type="helix" evidence="11">
    <location>
        <begin position="334"/>
        <end position="346"/>
    </location>
</feature>
<feature type="strand" evidence="11">
    <location>
        <begin position="362"/>
        <end position="365"/>
    </location>
</feature>
<feature type="helix" evidence="11">
    <location>
        <begin position="366"/>
        <end position="368"/>
    </location>
</feature>
<feature type="turn" evidence="11">
    <location>
        <begin position="375"/>
        <end position="380"/>
    </location>
</feature>
<feature type="strand" evidence="12">
    <location>
        <begin position="381"/>
        <end position="383"/>
    </location>
</feature>
<feature type="helix" evidence="11">
    <location>
        <begin position="384"/>
        <end position="390"/>
    </location>
</feature>
<feature type="strand" evidence="11">
    <location>
        <begin position="396"/>
        <end position="403"/>
    </location>
</feature>
<feature type="helix" evidence="11">
    <location>
        <begin position="404"/>
        <end position="415"/>
    </location>
</feature>
<feature type="turn" evidence="11">
    <location>
        <begin position="416"/>
        <end position="419"/>
    </location>
</feature>
<feature type="strand" evidence="11">
    <location>
        <begin position="426"/>
        <end position="435"/>
    </location>
</feature>
<feature type="strand" evidence="11">
    <location>
        <begin position="445"/>
        <end position="451"/>
    </location>
</feature>
<feature type="strand" evidence="11">
    <location>
        <begin position="453"/>
        <end position="457"/>
    </location>
</feature>
<feature type="strand" evidence="11">
    <location>
        <begin position="459"/>
        <end position="462"/>
    </location>
</feature>
<feature type="strand" evidence="11">
    <location>
        <begin position="467"/>
        <end position="474"/>
    </location>
</feature>
<feature type="helix" evidence="11">
    <location>
        <begin position="475"/>
        <end position="478"/>
    </location>
</feature>
<feature type="helix" evidence="11">
    <location>
        <begin position="481"/>
        <end position="483"/>
    </location>
</feature>
<feature type="helix" evidence="11">
    <location>
        <begin position="485"/>
        <end position="487"/>
    </location>
</feature>
<feature type="turn" evidence="11">
    <location>
        <begin position="491"/>
        <end position="493"/>
    </location>
</feature>
<feature type="strand" evidence="11">
    <location>
        <begin position="494"/>
        <end position="499"/>
    </location>
</feature>
<feature type="helix" evidence="11">
    <location>
        <begin position="500"/>
        <end position="511"/>
    </location>
</feature>
<feature type="strand" evidence="11">
    <location>
        <begin position="512"/>
        <end position="514"/>
    </location>
</feature>
<feature type="strand" evidence="11">
    <location>
        <begin position="520"/>
        <end position="524"/>
    </location>
</feature>
<evidence type="ECO:0000250" key="1">
    <source>
        <dbReference type="UniProtKB" id="P0DJJ5"/>
    </source>
</evidence>
<evidence type="ECO:0000250" key="2">
    <source>
        <dbReference type="UniProtKB" id="P21589"/>
    </source>
</evidence>
<evidence type="ECO:0000250" key="3">
    <source>
        <dbReference type="UniProtKB" id="W8EFS0"/>
    </source>
</evidence>
<evidence type="ECO:0000303" key="4">
    <source ref="1"/>
</evidence>
<evidence type="ECO:0000305" key="5"/>
<evidence type="ECO:0000305" key="6">
    <source>
    </source>
</evidence>
<evidence type="ECO:0000305" key="7">
    <source ref="1"/>
</evidence>
<evidence type="ECO:0000312" key="8">
    <source>
        <dbReference type="PDB" id="5H7W"/>
    </source>
</evidence>
<evidence type="ECO:0007744" key="9">
    <source>
        <dbReference type="PDB" id="5H7W"/>
    </source>
</evidence>
<evidence type="ECO:0007744" key="10">
    <source>
        <dbReference type="PDB" id="7D0V"/>
    </source>
</evidence>
<evidence type="ECO:0007829" key="11">
    <source>
        <dbReference type="PDB" id="5H7W"/>
    </source>
</evidence>
<evidence type="ECO:0007829" key="12">
    <source>
        <dbReference type="PDB" id="7D0V"/>
    </source>
</evidence>
<dbReference type="EC" id="3.1.3.5" evidence="1"/>
<dbReference type="PDB" id="5H7W">
    <property type="method" value="X-ray"/>
    <property type="resolution" value="1.90 A"/>
    <property type="chains" value="A/B=1-529"/>
</dbReference>
<dbReference type="PDB" id="7D0V">
    <property type="method" value="X-ray"/>
    <property type="resolution" value="2.17 A"/>
    <property type="chains" value="A/B=1-529"/>
</dbReference>
<dbReference type="PDBsum" id="5H7W"/>
<dbReference type="PDBsum" id="7D0V"/>
<dbReference type="SMR" id="A0A2I4HXH5"/>
<dbReference type="GO" id="GO:0005886">
    <property type="term" value="C:plasma membrane"/>
    <property type="evidence" value="ECO:0007669"/>
    <property type="project" value="TreeGrafter"/>
</dbReference>
<dbReference type="GO" id="GO:0098552">
    <property type="term" value="C:side of membrane"/>
    <property type="evidence" value="ECO:0007669"/>
    <property type="project" value="UniProtKB-KW"/>
</dbReference>
<dbReference type="GO" id="GO:0008253">
    <property type="term" value="F:5'-nucleotidase activity"/>
    <property type="evidence" value="ECO:0007669"/>
    <property type="project" value="UniProtKB-EC"/>
</dbReference>
<dbReference type="GO" id="GO:0046872">
    <property type="term" value="F:metal ion binding"/>
    <property type="evidence" value="ECO:0007669"/>
    <property type="project" value="UniProtKB-KW"/>
</dbReference>
<dbReference type="GO" id="GO:0000166">
    <property type="term" value="F:nucleotide binding"/>
    <property type="evidence" value="ECO:0007669"/>
    <property type="project" value="UniProtKB-KW"/>
</dbReference>
<dbReference type="GO" id="GO:0006196">
    <property type="term" value="P:AMP catabolic process"/>
    <property type="evidence" value="ECO:0007669"/>
    <property type="project" value="TreeGrafter"/>
</dbReference>
<dbReference type="CDD" id="cd07409">
    <property type="entry name" value="MPP_CD73_N"/>
    <property type="match status" value="1"/>
</dbReference>
<dbReference type="FunFam" id="3.90.780.10:FF:000001">
    <property type="entry name" value="NT5E isoform 3"/>
    <property type="match status" value="1"/>
</dbReference>
<dbReference type="FunFam" id="3.60.21.10:FF:000020">
    <property type="entry name" value="NT5E isoform 4"/>
    <property type="match status" value="1"/>
</dbReference>
<dbReference type="Gene3D" id="3.60.21.10">
    <property type="match status" value="1"/>
</dbReference>
<dbReference type="Gene3D" id="3.90.780.10">
    <property type="entry name" value="5'-Nucleotidase, C-terminal domain"/>
    <property type="match status" value="1"/>
</dbReference>
<dbReference type="InterPro" id="IPR008334">
    <property type="entry name" value="5'-Nucleotdase_C"/>
</dbReference>
<dbReference type="InterPro" id="IPR036907">
    <property type="entry name" value="5'-Nucleotdase_C_sf"/>
</dbReference>
<dbReference type="InterPro" id="IPR006146">
    <property type="entry name" value="5'-Nucleotdase_CS"/>
</dbReference>
<dbReference type="InterPro" id="IPR006179">
    <property type="entry name" value="5_nucleotidase/apyrase"/>
</dbReference>
<dbReference type="InterPro" id="IPR004843">
    <property type="entry name" value="Calcineurin-like_PHP_ApaH"/>
</dbReference>
<dbReference type="InterPro" id="IPR029052">
    <property type="entry name" value="Metallo-depent_PP-like"/>
</dbReference>
<dbReference type="PANTHER" id="PTHR11575:SF24">
    <property type="entry name" value="5'-NUCLEOTIDASE"/>
    <property type="match status" value="1"/>
</dbReference>
<dbReference type="PANTHER" id="PTHR11575">
    <property type="entry name" value="5'-NUCLEOTIDASE-RELATED"/>
    <property type="match status" value="1"/>
</dbReference>
<dbReference type="Pfam" id="PF02872">
    <property type="entry name" value="5_nucleotid_C"/>
    <property type="match status" value="1"/>
</dbReference>
<dbReference type="Pfam" id="PF00149">
    <property type="entry name" value="Metallophos"/>
    <property type="match status" value="1"/>
</dbReference>
<dbReference type="PRINTS" id="PR01607">
    <property type="entry name" value="APYRASEFAMLY"/>
</dbReference>
<dbReference type="SUPFAM" id="SSF55816">
    <property type="entry name" value="5'-nucleotidase (syn. UDP-sugar hydrolase), C-terminal domain"/>
    <property type="match status" value="1"/>
</dbReference>
<dbReference type="SUPFAM" id="SSF56300">
    <property type="entry name" value="Metallo-dependent phosphatases"/>
    <property type="match status" value="1"/>
</dbReference>
<dbReference type="PROSITE" id="PS00785">
    <property type="entry name" value="5_NUCLEOTIDASE_1"/>
    <property type="match status" value="1"/>
</dbReference>
<dbReference type="PROSITE" id="PS00786">
    <property type="entry name" value="5_NUCLEOTIDASE_2"/>
    <property type="match status" value="1"/>
</dbReference>
<keyword id="KW-0002">3D-structure</keyword>
<keyword id="KW-1015">Disulfide bond</keyword>
<keyword id="KW-0325">Glycoprotein</keyword>
<keyword id="KW-0336">GPI-anchor</keyword>
<keyword id="KW-0378">Hydrolase</keyword>
<keyword id="KW-0449">Lipoprotein</keyword>
<keyword id="KW-0472">Membrane</keyword>
<keyword id="KW-0479">Metal-binding</keyword>
<keyword id="KW-0547">Nucleotide-binding</keyword>
<keyword id="KW-0732">Signal</keyword>
<keyword id="KW-0862">Zinc</keyword>
<proteinExistence type="evidence at protein level"/>
<organism>
    <name type="scientific">Naja atra</name>
    <name type="common">Chinese cobra</name>
    <dbReference type="NCBI Taxonomy" id="8656"/>
    <lineage>
        <taxon>Eukaryota</taxon>
        <taxon>Metazoa</taxon>
        <taxon>Chordata</taxon>
        <taxon>Craniata</taxon>
        <taxon>Vertebrata</taxon>
        <taxon>Euteleostomi</taxon>
        <taxon>Lepidosauria</taxon>
        <taxon>Squamata</taxon>
        <taxon>Bifurcata</taxon>
        <taxon>Unidentata</taxon>
        <taxon>Episquamata</taxon>
        <taxon>Toxicofera</taxon>
        <taxon>Serpentes</taxon>
        <taxon>Colubroidea</taxon>
        <taxon>Elapidae</taxon>
        <taxon>Elapinae</taxon>
        <taxon>Naja</taxon>
    </lineage>
</organism>
<sequence length="529" mass="58198">GSFELTILHTNDVHARLEQTSRDSGKCTGEDCYGGVARRATKIRQIRASHRNVLLLDAGDQYQGTIWFNYYKGREVVHFMNSLRYDAMALGNHEFDNGLNGLLDPLLKNVKFPILSANIRPKGPIASNISGYILPYKIINVGSEKVGIIGYTTKETPVLSNPGPYLEFRDEVEELQKHADKLTTLGVNKIIALGHSGFMEDCRIAQKVKGVDVVVGGHTNTFLYTGSPPSNEVAAGNYPFMQLSDDGRQVPVVQAYAFGKYLGYLNVTFDDKGKVIKASGNPILLNKSIQEDPAVKAEISRMKVQLQNYSSQEIGRTIVYLNGTTHACRFHECNLGNLICDAVVYNNLRHPDDNEWNHVSMCIVNGGGIRSPIDEQANNGIITLEELTAVLPFGGTFDLLQIKGSTLRQAFEHSVHRHGQGTGELLQVSGIKVVYDLSQKPGKRVVSLNVLCTECRVPTYVPLEMEKTYKVLLPSFLAAGGDGYYMLKGDSSNHSSGDLDISIVGDYIKRMGKVFPAMEGRMVFSAGSL</sequence>
<name>V5NTD_NAJAT</name>
<reference evidence="8" key="1">
    <citation type="submission" date="2016-11" db="PDB data bank">
        <title>Crystal structure of Taiwan cobra (Naja atra) venom 5'-nucleotidase at 1.9 Angstroms resolution.</title>
        <authorList>
            <person name="Chang C."/>
            <person name="Lin C.-C."/>
            <person name="Wu W.-G."/>
        </authorList>
    </citation>
    <scope>X-RAY CRYSTALLOGRAPHY (1.90 ANGSTROMS) IN COMPLEX WITH ZINC</scope>
    <scope>GLYCOSYLATION AT ASN-308 AND ASN-322</scope>
    <scope>DISULFIDE BONDS</scope>
</reference>
<reference evidence="10" key="2">
    <citation type="submission" date="2020-09" db="PDB data bank">
        <title>Crystal structure of Taiwan cobra 5'-nucleotidase.</title>
        <authorList>
            <person name="Tsai M.-H."/>
            <person name="Lin I.-J."/>
            <person name="Lin C.-C."/>
            <person name="Wu W.-G."/>
        </authorList>
    </citation>
    <scope>X-RAY CRYSTALLOGRAPHY (2.17 ANGSTROMS) IN COMPLEX WITH ZINC</scope>
    <scope>GLYCOSYLATION AT ASN-308 AND ASN-322</scope>
    <scope>DISULFIDE BONDS</scope>
</reference>
<reference key="3">
    <citation type="journal article" date="2010" name="Cell Biochem. Funct.">
        <title>The pharmacological role of nucleotidases in snake venoms.</title>
        <authorList>
            <person name="Dhananjaya B.L."/>
            <person name="D'Souza C.J."/>
        </authorList>
    </citation>
    <scope>REVIEW</scope>
    <scope>FUNCTION</scope>
</reference>
<protein>
    <recommendedName>
        <fullName evidence="4">Snake venom 5'-nucleotidase</fullName>
        <shortName evidence="3">5'-NT</shortName>
        <ecNumber evidence="1">3.1.3.5</ecNumber>
    </recommendedName>
    <alternativeName>
        <fullName evidence="1">Ecto-5'-nucleotidase</fullName>
    </alternativeName>
</protein>
<comment type="function">
    <text evidence="1 6">Hydrolyzes nucleotides into nucleosides (By similarity). Snake venom 5'-nucleotidases are widely distributed among venomous snake taxa, but there is a lack of information about their biological activities. They have been shown to inhibit platelet aggregation. This effect may be due to the liberation of inhibitory AMP or adenosine by its action on ADP released upon initiation of aggregation. Venom 5'-nucleotidases are also known to synergistically act in vivo with other toxins like ADPases, phospholipases, and disintegrins to exert a more pronounced anti-coagulant effect.</text>
</comment>
<comment type="catalytic activity">
    <reaction evidence="1">
        <text>a ribonucleoside 5'-phosphate + H2O = a ribonucleoside + phosphate</text>
        <dbReference type="Rhea" id="RHEA:12484"/>
        <dbReference type="ChEBI" id="CHEBI:15377"/>
        <dbReference type="ChEBI" id="CHEBI:18254"/>
        <dbReference type="ChEBI" id="CHEBI:43474"/>
        <dbReference type="ChEBI" id="CHEBI:58043"/>
        <dbReference type="EC" id="3.1.3.5"/>
    </reaction>
</comment>
<comment type="cofactor">
    <cofactor evidence="2">
        <name>Zn(2+)</name>
        <dbReference type="ChEBI" id="CHEBI:29105"/>
    </cofactor>
</comment>
<comment type="subcellular location">
    <subcellularLocation>
        <location evidence="1">Membrane</location>
        <topology evidence="2">Lipid-anchor</topology>
        <topology evidence="2">GPI-anchor</topology>
    </subcellularLocation>
</comment>
<comment type="tissue specificity">
    <text evidence="7">Expressed by the venom gland.</text>
</comment>
<comment type="PTM">
    <text>Venom 5'-nucleotidases (or a part thereof) may be released into the venom via exosome-like vesicles. They may be attached via a GPI anchor to the membrane of these vesicles. Soluble forms of 5'-nucleotidase might be released by cleavage of the ectodomain in the exosome-like vesicles or venom gland cells.</text>
</comment>
<comment type="similarity">
    <text evidence="5">Belongs to the 5'-nucleotidase family.</text>
</comment>
<accession>A0A2I4HXH5</accession>